<dbReference type="EC" id="2.6.1.9" evidence="1"/>
<dbReference type="EMBL" id="CP000916">
    <property type="protein sequence ID" value="ACM23702.1"/>
    <property type="molecule type" value="Genomic_DNA"/>
</dbReference>
<dbReference type="RefSeq" id="WP_015919991.1">
    <property type="nucleotide sequence ID" value="NC_011978.1"/>
</dbReference>
<dbReference type="SMR" id="B9K9R9"/>
<dbReference type="STRING" id="309803.CTN_1526"/>
<dbReference type="KEGG" id="tna:CTN_1526"/>
<dbReference type="eggNOG" id="COG0079">
    <property type="taxonomic scope" value="Bacteria"/>
</dbReference>
<dbReference type="HOGENOM" id="CLU_017584_3_1_0"/>
<dbReference type="UniPathway" id="UPA00031">
    <property type="reaction ID" value="UER00012"/>
</dbReference>
<dbReference type="Proteomes" id="UP000000445">
    <property type="component" value="Chromosome"/>
</dbReference>
<dbReference type="GO" id="GO:0004400">
    <property type="term" value="F:histidinol-phosphate transaminase activity"/>
    <property type="evidence" value="ECO:0007669"/>
    <property type="project" value="UniProtKB-UniRule"/>
</dbReference>
<dbReference type="GO" id="GO:0030170">
    <property type="term" value="F:pyridoxal phosphate binding"/>
    <property type="evidence" value="ECO:0007669"/>
    <property type="project" value="InterPro"/>
</dbReference>
<dbReference type="GO" id="GO:0000105">
    <property type="term" value="P:L-histidine biosynthetic process"/>
    <property type="evidence" value="ECO:0007669"/>
    <property type="project" value="UniProtKB-UniRule"/>
</dbReference>
<dbReference type="CDD" id="cd00609">
    <property type="entry name" value="AAT_like"/>
    <property type="match status" value="1"/>
</dbReference>
<dbReference type="Gene3D" id="3.90.1150.10">
    <property type="entry name" value="Aspartate Aminotransferase, domain 1"/>
    <property type="match status" value="1"/>
</dbReference>
<dbReference type="Gene3D" id="3.40.640.10">
    <property type="entry name" value="Type I PLP-dependent aspartate aminotransferase-like (Major domain)"/>
    <property type="match status" value="1"/>
</dbReference>
<dbReference type="HAMAP" id="MF_01023">
    <property type="entry name" value="HisC_aminotrans_2"/>
    <property type="match status" value="1"/>
</dbReference>
<dbReference type="InterPro" id="IPR001917">
    <property type="entry name" value="Aminotrans_II_pyridoxalP_BS"/>
</dbReference>
<dbReference type="InterPro" id="IPR004839">
    <property type="entry name" value="Aminotransferase_I/II_large"/>
</dbReference>
<dbReference type="InterPro" id="IPR005861">
    <property type="entry name" value="HisP_aminotrans"/>
</dbReference>
<dbReference type="InterPro" id="IPR050106">
    <property type="entry name" value="HistidinolP_aminotransfase"/>
</dbReference>
<dbReference type="InterPro" id="IPR015424">
    <property type="entry name" value="PyrdxlP-dep_Trfase"/>
</dbReference>
<dbReference type="InterPro" id="IPR015421">
    <property type="entry name" value="PyrdxlP-dep_Trfase_major"/>
</dbReference>
<dbReference type="InterPro" id="IPR015422">
    <property type="entry name" value="PyrdxlP-dep_Trfase_small"/>
</dbReference>
<dbReference type="NCBIfam" id="TIGR01141">
    <property type="entry name" value="hisC"/>
    <property type="match status" value="1"/>
</dbReference>
<dbReference type="PANTHER" id="PTHR43643:SF3">
    <property type="entry name" value="HISTIDINOL-PHOSPHATE AMINOTRANSFERASE"/>
    <property type="match status" value="1"/>
</dbReference>
<dbReference type="PANTHER" id="PTHR43643">
    <property type="entry name" value="HISTIDINOL-PHOSPHATE AMINOTRANSFERASE 2"/>
    <property type="match status" value="1"/>
</dbReference>
<dbReference type="Pfam" id="PF00155">
    <property type="entry name" value="Aminotran_1_2"/>
    <property type="match status" value="1"/>
</dbReference>
<dbReference type="SUPFAM" id="SSF53383">
    <property type="entry name" value="PLP-dependent transferases"/>
    <property type="match status" value="1"/>
</dbReference>
<dbReference type="PROSITE" id="PS00599">
    <property type="entry name" value="AA_TRANSFER_CLASS_2"/>
    <property type="match status" value="1"/>
</dbReference>
<proteinExistence type="inferred from homology"/>
<keyword id="KW-0028">Amino-acid biosynthesis</keyword>
<keyword id="KW-0032">Aminotransferase</keyword>
<keyword id="KW-0368">Histidine biosynthesis</keyword>
<keyword id="KW-0663">Pyridoxal phosphate</keyword>
<keyword id="KW-0808">Transferase</keyword>
<gene>
    <name evidence="1" type="primary">hisC</name>
    <name type="ordered locus">CTN_1526</name>
</gene>
<accession>B9K9R9</accession>
<evidence type="ECO:0000255" key="1">
    <source>
        <dbReference type="HAMAP-Rule" id="MF_01023"/>
    </source>
</evidence>
<protein>
    <recommendedName>
        <fullName evidence="1">Histidinol-phosphate aminotransferase</fullName>
        <ecNumber evidence="1">2.6.1.9</ecNumber>
    </recommendedName>
    <alternativeName>
        <fullName evidence="1">Imidazole acetol-phosphate transaminase</fullName>
    </alternativeName>
</protein>
<organism>
    <name type="scientific">Thermotoga neapolitana (strain ATCC 49049 / DSM 4359 / NBRC 107923 / NS-E)</name>
    <dbReference type="NCBI Taxonomy" id="309803"/>
    <lineage>
        <taxon>Bacteria</taxon>
        <taxon>Thermotogati</taxon>
        <taxon>Thermotogota</taxon>
        <taxon>Thermotogae</taxon>
        <taxon>Thermotogales</taxon>
        <taxon>Thermotogaceae</taxon>
        <taxon>Thermotoga</taxon>
    </lineage>
</organism>
<name>HIS8_THENN</name>
<feature type="chain" id="PRO_1000149114" description="Histidinol-phosphate aminotransferase">
    <location>
        <begin position="1"/>
        <end position="335"/>
    </location>
</feature>
<feature type="modified residue" description="N6-(pyridoxal phosphate)lysine" evidence="1">
    <location>
        <position position="202"/>
    </location>
</feature>
<comment type="catalytic activity">
    <reaction evidence="1">
        <text>L-histidinol phosphate + 2-oxoglutarate = 3-(imidazol-4-yl)-2-oxopropyl phosphate + L-glutamate</text>
        <dbReference type="Rhea" id="RHEA:23744"/>
        <dbReference type="ChEBI" id="CHEBI:16810"/>
        <dbReference type="ChEBI" id="CHEBI:29985"/>
        <dbReference type="ChEBI" id="CHEBI:57766"/>
        <dbReference type="ChEBI" id="CHEBI:57980"/>
        <dbReference type="EC" id="2.6.1.9"/>
    </reaction>
</comment>
<comment type="cofactor">
    <cofactor evidence="1">
        <name>pyridoxal 5'-phosphate</name>
        <dbReference type="ChEBI" id="CHEBI:597326"/>
    </cofactor>
</comment>
<comment type="pathway">
    <text evidence="1">Amino-acid biosynthesis; L-histidine biosynthesis; L-histidine from 5-phospho-alpha-D-ribose 1-diphosphate: step 7/9.</text>
</comment>
<comment type="subunit">
    <text evidence="1">Homodimer.</text>
</comment>
<comment type="similarity">
    <text evidence="1">Belongs to the class-II pyridoxal-phosphate-dependent aminotransferase family. Histidinol-phosphate aminotransferase subfamily.</text>
</comment>
<sequence length="335" mass="39492">MNPVDLIIKRAYPYETEKRDRIYLALNENPFPFPKELTEEVFRKLEGDKMRIYYDSPDEELIEKILEYLDADFLRENNVSIGNGADEIIYVMMLMFERAVFFPPTYSCYRIFAKAVGAKYLEIPLTKYLKIPEVDVGEGDVVFIPNPNNPTGHVFEREEIEKILKKGAFVALDEAYYEFHGESYIDLLKEYENLAIIRTFSKAFSLAAQRIGYVISSEKFIDAYNRVRLPFNVSYVSQTFAKVALEHIDIFKERIEYIVSERERMKKALKELNYSISDSRGNFVFIFMDRKEQNKLIEQLRQKNIAVRSFREGVRITIGKREENETILKELEVFR</sequence>
<reference key="1">
    <citation type="submission" date="2007-11" db="EMBL/GenBank/DDBJ databases">
        <title>The genome sequence of the hyperthermophilic bacterium Thermotoga neapolitana.</title>
        <authorList>
            <person name="Lim S.K."/>
            <person name="Kim J.S."/>
            <person name="Cha S.H."/>
            <person name="Park B.C."/>
            <person name="Lee D.S."/>
            <person name="Tae H.S."/>
            <person name="Kim S.-J."/>
            <person name="Kim J.J."/>
            <person name="Park K.J."/>
            <person name="Lee S.Y."/>
        </authorList>
    </citation>
    <scope>NUCLEOTIDE SEQUENCE [LARGE SCALE GENOMIC DNA]</scope>
    <source>
        <strain>ATCC 49049 / DSM 4359 / NBRC 107923 / NS-E</strain>
    </source>
</reference>